<accession>B5EUW3</accession>
<protein>
    <recommendedName>
        <fullName evidence="1">Glucose-1-phosphate adenylyltransferase</fullName>
        <ecNumber evidence="1">2.7.7.27</ecNumber>
    </recommendedName>
    <alternativeName>
        <fullName evidence="1">ADP-glucose pyrophosphorylase</fullName>
        <shortName evidence="1">ADPGlc PPase</shortName>
    </alternativeName>
    <alternativeName>
        <fullName evidence="1">ADP-glucose synthase</fullName>
    </alternativeName>
</protein>
<name>GLGC_ALIFM</name>
<dbReference type="EC" id="2.7.7.27" evidence="1"/>
<dbReference type="EMBL" id="CP001133">
    <property type="protein sequence ID" value="ACH63863.1"/>
    <property type="molecule type" value="Genomic_DNA"/>
</dbReference>
<dbReference type="RefSeq" id="WP_012535032.1">
    <property type="nucleotide sequence ID" value="NC_011186.1"/>
</dbReference>
<dbReference type="SMR" id="B5EUW3"/>
<dbReference type="KEGG" id="vfm:VFMJ11_A0933"/>
<dbReference type="HOGENOM" id="CLU_029499_14_1_6"/>
<dbReference type="UniPathway" id="UPA00164"/>
<dbReference type="Proteomes" id="UP000001857">
    <property type="component" value="Chromosome II"/>
</dbReference>
<dbReference type="GO" id="GO:0005524">
    <property type="term" value="F:ATP binding"/>
    <property type="evidence" value="ECO:0007669"/>
    <property type="project" value="UniProtKB-KW"/>
</dbReference>
<dbReference type="GO" id="GO:0008878">
    <property type="term" value="F:glucose-1-phosphate adenylyltransferase activity"/>
    <property type="evidence" value="ECO:0007669"/>
    <property type="project" value="UniProtKB-UniRule"/>
</dbReference>
<dbReference type="GO" id="GO:0005978">
    <property type="term" value="P:glycogen biosynthetic process"/>
    <property type="evidence" value="ECO:0007669"/>
    <property type="project" value="UniProtKB-UniRule"/>
</dbReference>
<dbReference type="CDD" id="cd02508">
    <property type="entry name" value="ADP_Glucose_PP"/>
    <property type="match status" value="1"/>
</dbReference>
<dbReference type="CDD" id="cd04651">
    <property type="entry name" value="LbH_G1P_AT_C"/>
    <property type="match status" value="1"/>
</dbReference>
<dbReference type="Gene3D" id="2.160.10.10">
    <property type="entry name" value="Hexapeptide repeat proteins"/>
    <property type="match status" value="1"/>
</dbReference>
<dbReference type="Gene3D" id="3.90.550.10">
    <property type="entry name" value="Spore Coat Polysaccharide Biosynthesis Protein SpsA, Chain A"/>
    <property type="match status" value="1"/>
</dbReference>
<dbReference type="HAMAP" id="MF_00624">
    <property type="entry name" value="GlgC"/>
    <property type="match status" value="1"/>
</dbReference>
<dbReference type="InterPro" id="IPR011831">
    <property type="entry name" value="ADP-Glc_PPase"/>
</dbReference>
<dbReference type="InterPro" id="IPR005836">
    <property type="entry name" value="ADP_Glu_pyroP_CS"/>
</dbReference>
<dbReference type="InterPro" id="IPR023049">
    <property type="entry name" value="GlgC_bac"/>
</dbReference>
<dbReference type="InterPro" id="IPR056818">
    <property type="entry name" value="GlmU/GlgC-like_hexapep"/>
</dbReference>
<dbReference type="InterPro" id="IPR005835">
    <property type="entry name" value="NTP_transferase_dom"/>
</dbReference>
<dbReference type="InterPro" id="IPR029044">
    <property type="entry name" value="Nucleotide-diphossugar_trans"/>
</dbReference>
<dbReference type="InterPro" id="IPR011004">
    <property type="entry name" value="Trimer_LpxA-like_sf"/>
</dbReference>
<dbReference type="NCBIfam" id="TIGR02091">
    <property type="entry name" value="glgC"/>
    <property type="match status" value="1"/>
</dbReference>
<dbReference type="NCBIfam" id="NF001947">
    <property type="entry name" value="PRK00725.1"/>
    <property type="match status" value="1"/>
</dbReference>
<dbReference type="NCBIfam" id="NF002023">
    <property type="entry name" value="PRK00844.1"/>
    <property type="match status" value="1"/>
</dbReference>
<dbReference type="PANTHER" id="PTHR43523:SF2">
    <property type="entry name" value="GLUCOSE-1-PHOSPHATE ADENYLYLTRANSFERASE"/>
    <property type="match status" value="1"/>
</dbReference>
<dbReference type="PANTHER" id="PTHR43523">
    <property type="entry name" value="GLUCOSE-1-PHOSPHATE ADENYLYLTRANSFERASE-RELATED"/>
    <property type="match status" value="1"/>
</dbReference>
<dbReference type="Pfam" id="PF24894">
    <property type="entry name" value="Hexapep_GlmU"/>
    <property type="match status" value="1"/>
</dbReference>
<dbReference type="Pfam" id="PF00483">
    <property type="entry name" value="NTP_transferase"/>
    <property type="match status" value="1"/>
</dbReference>
<dbReference type="SUPFAM" id="SSF53448">
    <property type="entry name" value="Nucleotide-diphospho-sugar transferases"/>
    <property type="match status" value="1"/>
</dbReference>
<dbReference type="SUPFAM" id="SSF51161">
    <property type="entry name" value="Trimeric LpxA-like enzymes"/>
    <property type="match status" value="1"/>
</dbReference>
<dbReference type="PROSITE" id="PS00808">
    <property type="entry name" value="ADP_GLC_PYROPHOSPH_1"/>
    <property type="match status" value="1"/>
</dbReference>
<dbReference type="PROSITE" id="PS00809">
    <property type="entry name" value="ADP_GLC_PYROPHOSPH_2"/>
    <property type="match status" value="1"/>
</dbReference>
<dbReference type="PROSITE" id="PS00810">
    <property type="entry name" value="ADP_GLC_PYROPHOSPH_3"/>
    <property type="match status" value="1"/>
</dbReference>
<evidence type="ECO:0000255" key="1">
    <source>
        <dbReference type="HAMAP-Rule" id="MF_00624"/>
    </source>
</evidence>
<proteinExistence type="inferred from homology"/>
<feature type="chain" id="PRO_1000130512" description="Glucose-1-phosphate adenylyltransferase">
    <location>
        <begin position="1"/>
        <end position="405"/>
    </location>
</feature>
<feature type="binding site" evidence="1">
    <location>
        <position position="96"/>
    </location>
    <ligand>
        <name>alpha-D-glucose 1-phosphate</name>
        <dbReference type="ChEBI" id="CHEBI:58601"/>
    </ligand>
</feature>
<feature type="binding site" evidence="1">
    <location>
        <position position="161"/>
    </location>
    <ligand>
        <name>alpha-D-glucose 1-phosphate</name>
        <dbReference type="ChEBI" id="CHEBI:58601"/>
    </ligand>
</feature>
<feature type="binding site" evidence="1">
    <location>
        <begin position="176"/>
        <end position="177"/>
    </location>
    <ligand>
        <name>alpha-D-glucose 1-phosphate</name>
        <dbReference type="ChEBI" id="CHEBI:58601"/>
    </ligand>
</feature>
<feature type="binding site" evidence="1">
    <location>
        <position position="194"/>
    </location>
    <ligand>
        <name>alpha-D-glucose 1-phosphate</name>
        <dbReference type="ChEBI" id="CHEBI:58601"/>
    </ligand>
</feature>
<organism>
    <name type="scientific">Aliivibrio fischeri (strain MJ11)</name>
    <name type="common">Vibrio fischeri</name>
    <dbReference type="NCBI Taxonomy" id="388396"/>
    <lineage>
        <taxon>Bacteria</taxon>
        <taxon>Pseudomonadati</taxon>
        <taxon>Pseudomonadota</taxon>
        <taxon>Gammaproteobacteria</taxon>
        <taxon>Vibrionales</taxon>
        <taxon>Vibrionaceae</taxon>
        <taxon>Aliivibrio</taxon>
    </lineage>
</organism>
<reference key="1">
    <citation type="submission" date="2008-08" db="EMBL/GenBank/DDBJ databases">
        <title>Complete sequence of Vibrio fischeri strain MJ11.</title>
        <authorList>
            <person name="Mandel M.J."/>
            <person name="Stabb E.V."/>
            <person name="Ruby E.G."/>
            <person name="Ferriera S."/>
            <person name="Johnson J."/>
            <person name="Kravitz S."/>
            <person name="Beeson K."/>
            <person name="Sutton G."/>
            <person name="Rogers Y.-H."/>
            <person name="Friedman R."/>
            <person name="Frazier M."/>
            <person name="Venter J.C."/>
        </authorList>
    </citation>
    <scope>NUCLEOTIDE SEQUENCE [LARGE SCALE GENOMIC DNA]</scope>
    <source>
        <strain>MJ11</strain>
    </source>
</reference>
<sequence length="405" mass="45157">MAGVLGMILAGGEGSRLRPLTESRTKPAVPFGGSYRLIDFALNNFVNADLMRIYVLTQFKSQSLFQHMKKGWNVNGITDRFIDPVPAQMRTGKRWYEGTADAIYQNISFIESTDPEHVCIFGSDHIYKMDIRQMLDFHKKKKAALTVSALRMPAKDASGFGVIEVDEHGKMIGFEEKPSNPKCIPGQPGIALVSMGNYIFEAESLCKELIHDAALEDSSHDFGKDIIPKMFPEGNVYVYDFSTNHITGEKKEVYWRDVGTIESYWEAHMDLLKKDAPFSLYNRKWPLHTYYPPLPPATFSDSDNGRVQIIDSLVCGGSYIRGSRIEKSVLGFRSNIASACDISESILLGNVKVGKGCVLRRVIVDKGADIAPGTEIGVNLQEDKKKYHVSDEGIVVIPKGERVGY</sequence>
<gene>
    <name evidence="1" type="primary">glgC</name>
    <name type="ordered locus">VFMJ11_A0933</name>
</gene>
<keyword id="KW-0067">ATP-binding</keyword>
<keyword id="KW-0119">Carbohydrate metabolism</keyword>
<keyword id="KW-0320">Glycogen biosynthesis</keyword>
<keyword id="KW-0321">Glycogen metabolism</keyword>
<keyword id="KW-0547">Nucleotide-binding</keyword>
<keyword id="KW-0548">Nucleotidyltransferase</keyword>
<keyword id="KW-0808">Transferase</keyword>
<comment type="function">
    <text evidence="1">Involved in the biosynthesis of ADP-glucose, a building block required for the elongation reactions to produce glycogen. Catalyzes the reaction between ATP and alpha-D-glucose 1-phosphate (G1P) to produce pyrophosphate and ADP-Glc.</text>
</comment>
<comment type="catalytic activity">
    <reaction evidence="1">
        <text>alpha-D-glucose 1-phosphate + ATP + H(+) = ADP-alpha-D-glucose + diphosphate</text>
        <dbReference type="Rhea" id="RHEA:12120"/>
        <dbReference type="ChEBI" id="CHEBI:15378"/>
        <dbReference type="ChEBI" id="CHEBI:30616"/>
        <dbReference type="ChEBI" id="CHEBI:33019"/>
        <dbReference type="ChEBI" id="CHEBI:57498"/>
        <dbReference type="ChEBI" id="CHEBI:58601"/>
        <dbReference type="EC" id="2.7.7.27"/>
    </reaction>
</comment>
<comment type="pathway">
    <text evidence="1">Glycan biosynthesis; glycogen biosynthesis.</text>
</comment>
<comment type="subunit">
    <text evidence="1">Homotetramer.</text>
</comment>
<comment type="similarity">
    <text evidence="1">Belongs to the bacterial/plant glucose-1-phosphate adenylyltransferase family.</text>
</comment>